<proteinExistence type="inferred from homology"/>
<evidence type="ECO:0000255" key="1">
    <source>
        <dbReference type="HAMAP-Rule" id="MF_01657"/>
    </source>
</evidence>
<dbReference type="EC" id="1.2.1.10" evidence="1"/>
<dbReference type="EMBL" id="CP000686">
    <property type="protein sequence ID" value="ABQ90948.1"/>
    <property type="molecule type" value="Genomic_DNA"/>
</dbReference>
<dbReference type="RefSeq" id="WP_011957292.1">
    <property type="nucleotide sequence ID" value="NC_009523.1"/>
</dbReference>
<dbReference type="SMR" id="A5UWE5"/>
<dbReference type="STRING" id="357808.RoseRS_2572"/>
<dbReference type="KEGG" id="rrs:RoseRS_2572"/>
<dbReference type="eggNOG" id="COG4569">
    <property type="taxonomic scope" value="Bacteria"/>
</dbReference>
<dbReference type="HOGENOM" id="CLU_062208_0_0_0"/>
<dbReference type="OrthoDB" id="9783105at2"/>
<dbReference type="Proteomes" id="UP000006554">
    <property type="component" value="Chromosome"/>
</dbReference>
<dbReference type="GO" id="GO:0008774">
    <property type="term" value="F:acetaldehyde dehydrogenase (acetylating) activity"/>
    <property type="evidence" value="ECO:0007669"/>
    <property type="project" value="UniProtKB-UniRule"/>
</dbReference>
<dbReference type="GO" id="GO:0051287">
    <property type="term" value="F:NAD binding"/>
    <property type="evidence" value="ECO:0007669"/>
    <property type="project" value="UniProtKB-UniRule"/>
</dbReference>
<dbReference type="GO" id="GO:0009056">
    <property type="term" value="P:catabolic process"/>
    <property type="evidence" value="ECO:0007669"/>
    <property type="project" value="UniProtKB-KW"/>
</dbReference>
<dbReference type="CDD" id="cd23933">
    <property type="entry name" value="ALDH_C"/>
    <property type="match status" value="1"/>
</dbReference>
<dbReference type="Gene3D" id="3.30.360.10">
    <property type="entry name" value="Dihydrodipicolinate Reductase, domain 2"/>
    <property type="match status" value="1"/>
</dbReference>
<dbReference type="Gene3D" id="3.40.50.720">
    <property type="entry name" value="NAD(P)-binding Rossmann-like Domain"/>
    <property type="match status" value="1"/>
</dbReference>
<dbReference type="HAMAP" id="MF_01657">
    <property type="entry name" value="Ac_ald_DH_ac"/>
    <property type="match status" value="1"/>
</dbReference>
<dbReference type="InterPro" id="IPR003361">
    <property type="entry name" value="Acetaldehyde_dehydrogenase"/>
</dbReference>
<dbReference type="InterPro" id="IPR015426">
    <property type="entry name" value="Acetylaldehyde_DH_C"/>
</dbReference>
<dbReference type="InterPro" id="IPR036291">
    <property type="entry name" value="NAD(P)-bd_dom_sf"/>
</dbReference>
<dbReference type="InterPro" id="IPR000534">
    <property type="entry name" value="Semialdehyde_DH_NAD-bd"/>
</dbReference>
<dbReference type="NCBIfam" id="TIGR03215">
    <property type="entry name" value="ac_ald_DH_ac"/>
    <property type="match status" value="1"/>
</dbReference>
<dbReference type="NCBIfam" id="NF006157">
    <property type="entry name" value="PRK08300.1"/>
    <property type="match status" value="1"/>
</dbReference>
<dbReference type="Pfam" id="PF09290">
    <property type="entry name" value="AcetDehyd-dimer"/>
    <property type="match status" value="1"/>
</dbReference>
<dbReference type="Pfam" id="PF01118">
    <property type="entry name" value="Semialdhyde_dh"/>
    <property type="match status" value="1"/>
</dbReference>
<dbReference type="PIRSF" id="PIRSF015689">
    <property type="entry name" value="Actaldh_dh_actl"/>
    <property type="match status" value="1"/>
</dbReference>
<dbReference type="SMART" id="SM00859">
    <property type="entry name" value="Semialdhyde_dh"/>
    <property type="match status" value="1"/>
</dbReference>
<dbReference type="SUPFAM" id="SSF55347">
    <property type="entry name" value="Glyceraldehyde-3-phosphate dehydrogenase-like, C-terminal domain"/>
    <property type="match status" value="1"/>
</dbReference>
<dbReference type="SUPFAM" id="SSF51735">
    <property type="entry name" value="NAD(P)-binding Rossmann-fold domains"/>
    <property type="match status" value="1"/>
</dbReference>
<comment type="catalytic activity">
    <reaction evidence="1">
        <text>acetaldehyde + NAD(+) + CoA = acetyl-CoA + NADH + H(+)</text>
        <dbReference type="Rhea" id="RHEA:23288"/>
        <dbReference type="ChEBI" id="CHEBI:15343"/>
        <dbReference type="ChEBI" id="CHEBI:15378"/>
        <dbReference type="ChEBI" id="CHEBI:57287"/>
        <dbReference type="ChEBI" id="CHEBI:57288"/>
        <dbReference type="ChEBI" id="CHEBI:57540"/>
        <dbReference type="ChEBI" id="CHEBI:57945"/>
        <dbReference type="EC" id="1.2.1.10"/>
    </reaction>
</comment>
<comment type="similarity">
    <text evidence="1">Belongs to the acetaldehyde dehydrogenase family.</text>
</comment>
<reference key="1">
    <citation type="submission" date="2007-04" db="EMBL/GenBank/DDBJ databases">
        <title>Complete sequence of Roseiflexus sp. RS-1.</title>
        <authorList>
            <consortium name="US DOE Joint Genome Institute"/>
            <person name="Copeland A."/>
            <person name="Lucas S."/>
            <person name="Lapidus A."/>
            <person name="Barry K."/>
            <person name="Detter J.C."/>
            <person name="Glavina del Rio T."/>
            <person name="Hammon N."/>
            <person name="Israni S."/>
            <person name="Dalin E."/>
            <person name="Tice H."/>
            <person name="Pitluck S."/>
            <person name="Chertkov O."/>
            <person name="Brettin T."/>
            <person name="Bruce D."/>
            <person name="Han C."/>
            <person name="Schmutz J."/>
            <person name="Larimer F."/>
            <person name="Land M."/>
            <person name="Hauser L."/>
            <person name="Kyrpides N."/>
            <person name="Mikhailova N."/>
            <person name="Bryant D.A."/>
            <person name="Richardson P."/>
        </authorList>
    </citation>
    <scope>NUCLEOTIDE SEQUENCE [LARGE SCALE GENOMIC DNA]</scope>
    <source>
        <strain>RS-1</strain>
    </source>
</reference>
<gene>
    <name type="ordered locus">RoseRS_2572</name>
</gene>
<protein>
    <recommendedName>
        <fullName evidence="1">Acetaldehyde dehydrogenase</fullName>
        <ecNumber evidence="1">1.2.1.10</ecNumber>
    </recommendedName>
    <alternativeName>
        <fullName evidence="1">Acetaldehyde dehydrogenase [acetylating]</fullName>
    </alternativeName>
</protein>
<keyword id="KW-0058">Aromatic hydrocarbons catabolism</keyword>
<keyword id="KW-0520">NAD</keyword>
<keyword id="KW-0560">Oxidoreductase</keyword>
<feature type="chain" id="PRO_0000387735" description="Acetaldehyde dehydrogenase">
    <location>
        <begin position="1"/>
        <end position="305"/>
    </location>
</feature>
<feature type="active site" description="Acyl-thioester intermediate" evidence="1">
    <location>
        <position position="128"/>
    </location>
</feature>
<feature type="binding site" evidence="1">
    <location>
        <begin position="13"/>
        <end position="16"/>
    </location>
    <ligand>
        <name>NAD(+)</name>
        <dbReference type="ChEBI" id="CHEBI:57540"/>
    </ligand>
</feature>
<feature type="binding site" evidence="1">
    <location>
        <begin position="159"/>
        <end position="167"/>
    </location>
    <ligand>
        <name>NAD(+)</name>
        <dbReference type="ChEBI" id="CHEBI:57540"/>
    </ligand>
</feature>
<feature type="binding site" evidence="1">
    <location>
        <position position="278"/>
    </location>
    <ligand>
        <name>NAD(+)</name>
        <dbReference type="ChEBI" id="CHEBI:57540"/>
    </ligand>
</feature>
<organism>
    <name type="scientific">Roseiflexus sp. (strain RS-1)</name>
    <dbReference type="NCBI Taxonomy" id="357808"/>
    <lineage>
        <taxon>Bacteria</taxon>
        <taxon>Bacillati</taxon>
        <taxon>Chloroflexota</taxon>
        <taxon>Chloroflexia</taxon>
        <taxon>Chloroflexales</taxon>
        <taxon>Roseiflexineae</taxon>
        <taxon>Roseiflexaceae</taxon>
        <taxon>Roseiflexus</taxon>
    </lineage>
</organism>
<accession>A5UWE5</accession>
<name>ACDH_ROSS1</name>
<sequence>MGDETIKVAILGSGNIGTDLMYKLLDHPGSMELVLLAGIDPHSEGLARARSLGVATSDQGIAAVLERPEIQIVFDATSAKAHVRHAKLLHETGRIAIDLTPAARGPYVVPPVNLTQHLDALNVNLITCGGQATIPLVYAVSRVTPVCYAEIVSTVASRSAGPGTRQNIDEFTFTTAHGLEVIGGAQQGKAIIILNPAEPPILMRNTVYAIPAGDFDPAQVRDSIEAIVAEVQQYVPGYRLTNPPVFNMRETPWGRKPVVTALLEVEGAGHFLPTYAGNLDIMTASARRVGEVFAQQLLSRREVLV</sequence>